<protein>
    <recommendedName>
        <fullName evidence="1">Large ribosomal subunit protein bL17</fullName>
    </recommendedName>
    <alternativeName>
        <fullName evidence="2">50S ribosomal protein L17</fullName>
    </alternativeName>
</protein>
<keyword id="KW-0687">Ribonucleoprotein</keyword>
<keyword id="KW-0689">Ribosomal protein</keyword>
<name>RL17_TRIV2</name>
<feature type="chain" id="PRO_0000267818" description="Large ribosomal subunit protein bL17">
    <location>
        <begin position="1"/>
        <end position="116"/>
    </location>
</feature>
<evidence type="ECO:0000255" key="1">
    <source>
        <dbReference type="HAMAP-Rule" id="MF_01368"/>
    </source>
</evidence>
<evidence type="ECO:0000305" key="2"/>
<sequence length="116" mass="13272">MRHRNRVKKLGKPADQRRALLRALTTELIRHGRITTTLVRAKVVRSEVDKIITLAKDGSLAARRRALGYIYDKQLVHALFEQVSSRYGNRQGGYTRILHTVPRRGDNAEMAIIELV</sequence>
<reference key="1">
    <citation type="journal article" date="2014" name="Stand. Genomic Sci.">
        <title>Complete genome sequence of Anabaena variabilis ATCC 29413.</title>
        <authorList>
            <person name="Thiel T."/>
            <person name="Pratte B.S."/>
            <person name="Zhong J."/>
            <person name="Goodwin L."/>
            <person name="Copeland A."/>
            <person name="Lucas S."/>
            <person name="Han C."/>
            <person name="Pitluck S."/>
            <person name="Land M.L."/>
            <person name="Kyrpides N.C."/>
            <person name="Woyke T."/>
        </authorList>
    </citation>
    <scope>NUCLEOTIDE SEQUENCE [LARGE SCALE GENOMIC DNA]</scope>
    <source>
        <strain>ATCC 29413 / PCC 7937</strain>
    </source>
</reference>
<gene>
    <name evidence="1" type="primary">rplQ</name>
    <name evidence="1" type="synonym">rpl17</name>
    <name type="ordered locus">Ava_0716</name>
</gene>
<accession>Q3MF96</accession>
<comment type="subunit">
    <text evidence="1">Part of the 50S ribosomal subunit. Contacts protein L32.</text>
</comment>
<comment type="similarity">
    <text evidence="1">Belongs to the bacterial ribosomal protein bL17 family.</text>
</comment>
<organism>
    <name type="scientific">Trichormus variabilis (strain ATCC 29413 / PCC 7937)</name>
    <name type="common">Anabaena variabilis</name>
    <dbReference type="NCBI Taxonomy" id="240292"/>
    <lineage>
        <taxon>Bacteria</taxon>
        <taxon>Bacillati</taxon>
        <taxon>Cyanobacteriota</taxon>
        <taxon>Cyanophyceae</taxon>
        <taxon>Nostocales</taxon>
        <taxon>Nostocaceae</taxon>
        <taxon>Trichormus</taxon>
    </lineage>
</organism>
<dbReference type="EMBL" id="CP000117">
    <property type="protein sequence ID" value="ABA20340.1"/>
    <property type="molecule type" value="Genomic_DNA"/>
</dbReference>
<dbReference type="RefSeq" id="WP_010998329.1">
    <property type="nucleotide sequence ID" value="NC_007413.1"/>
</dbReference>
<dbReference type="SMR" id="Q3MF96"/>
<dbReference type="STRING" id="240292.Ava_0716"/>
<dbReference type="GeneID" id="58723374"/>
<dbReference type="KEGG" id="ava:Ava_0716"/>
<dbReference type="eggNOG" id="COG0203">
    <property type="taxonomic scope" value="Bacteria"/>
</dbReference>
<dbReference type="HOGENOM" id="CLU_074407_2_2_3"/>
<dbReference type="Proteomes" id="UP000002533">
    <property type="component" value="Chromosome"/>
</dbReference>
<dbReference type="GO" id="GO:0022625">
    <property type="term" value="C:cytosolic large ribosomal subunit"/>
    <property type="evidence" value="ECO:0007669"/>
    <property type="project" value="TreeGrafter"/>
</dbReference>
<dbReference type="GO" id="GO:0003735">
    <property type="term" value="F:structural constituent of ribosome"/>
    <property type="evidence" value="ECO:0007669"/>
    <property type="project" value="InterPro"/>
</dbReference>
<dbReference type="GO" id="GO:0006412">
    <property type="term" value="P:translation"/>
    <property type="evidence" value="ECO:0007669"/>
    <property type="project" value="UniProtKB-UniRule"/>
</dbReference>
<dbReference type="FunFam" id="3.90.1030.10:FF:000001">
    <property type="entry name" value="50S ribosomal protein L17"/>
    <property type="match status" value="1"/>
</dbReference>
<dbReference type="Gene3D" id="3.90.1030.10">
    <property type="entry name" value="Ribosomal protein L17"/>
    <property type="match status" value="1"/>
</dbReference>
<dbReference type="HAMAP" id="MF_01368">
    <property type="entry name" value="Ribosomal_bL17"/>
    <property type="match status" value="1"/>
</dbReference>
<dbReference type="InterPro" id="IPR000456">
    <property type="entry name" value="Ribosomal_bL17"/>
</dbReference>
<dbReference type="InterPro" id="IPR047859">
    <property type="entry name" value="Ribosomal_bL17_CS"/>
</dbReference>
<dbReference type="InterPro" id="IPR036373">
    <property type="entry name" value="Ribosomal_bL17_sf"/>
</dbReference>
<dbReference type="NCBIfam" id="TIGR00059">
    <property type="entry name" value="L17"/>
    <property type="match status" value="1"/>
</dbReference>
<dbReference type="PANTHER" id="PTHR14413:SF16">
    <property type="entry name" value="LARGE RIBOSOMAL SUBUNIT PROTEIN BL17M"/>
    <property type="match status" value="1"/>
</dbReference>
<dbReference type="PANTHER" id="PTHR14413">
    <property type="entry name" value="RIBOSOMAL PROTEIN L17"/>
    <property type="match status" value="1"/>
</dbReference>
<dbReference type="Pfam" id="PF01196">
    <property type="entry name" value="Ribosomal_L17"/>
    <property type="match status" value="1"/>
</dbReference>
<dbReference type="SUPFAM" id="SSF64263">
    <property type="entry name" value="Prokaryotic ribosomal protein L17"/>
    <property type="match status" value="1"/>
</dbReference>
<dbReference type="PROSITE" id="PS01167">
    <property type="entry name" value="RIBOSOMAL_L17"/>
    <property type="match status" value="1"/>
</dbReference>
<proteinExistence type="inferred from homology"/>